<keyword id="KW-0966">Cell projection</keyword>
<keyword id="KW-0969">Cilium</keyword>
<keyword id="KW-0175">Coiled coil</keyword>
<keyword id="KW-0963">Cytoplasm</keyword>
<keyword id="KW-0206">Cytoskeleton</keyword>
<keyword id="KW-0282">Flagellum</keyword>
<keyword id="KW-0333">Golgi apparatus</keyword>
<keyword id="KW-0493">Microtubule</keyword>
<keyword id="KW-1185">Reference proteome</keyword>
<protein>
    <recommendedName>
        <fullName evidence="13">Dynein regulatory complex subunit 4</fullName>
    </recommendedName>
    <alternativeName>
        <fullName>Growth arrest-specific protein 11</fullName>
        <shortName>GAS-11</shortName>
    </alternativeName>
    <alternativeName>
        <fullName>Growth arrest-specific protein 8</fullName>
        <shortName>GAS-8</shortName>
    </alternativeName>
</protein>
<reference key="1">
    <citation type="journal article" date="2002" name="J. Biol. Chem.">
        <title>Isolation and properties of Gas8, a growth arrest-specific gene regulated during male gametogenesis to produce a protein associated with the sperm motility apparatus.</title>
        <authorList>
            <person name="Yeh S.-D."/>
            <person name="Chen Y.-J."/>
            <person name="Chang A.C.Y."/>
            <person name="Ray R."/>
            <person name="She B.-R."/>
            <person name="Lee W.-S."/>
            <person name="Chiang H.-S."/>
            <person name="Cohen S.N."/>
            <person name="Lin-Chao S."/>
        </authorList>
    </citation>
    <scope>NUCLEOTIDE SEQUENCE [MRNA]</scope>
    <scope>FUNCTION</scope>
    <scope>SUBCELLULAR LOCATION</scope>
    <scope>TISSUE SPECIFICITY</scope>
    <scope>DEVELOPMENTAL STAGE</scope>
</reference>
<reference key="2">
    <citation type="journal article" date="2004" name="Genome Res.">
        <title>The status, quality, and expansion of the NIH full-length cDNA project: the Mammalian Gene Collection (MGC).</title>
        <authorList>
            <consortium name="The MGC Project Team"/>
        </authorList>
    </citation>
    <scope>NUCLEOTIDE SEQUENCE [LARGE SCALE MRNA]</scope>
    <source>
        <strain>FVB/N</strain>
        <tissue>Mammary gland</tissue>
    </source>
</reference>
<reference key="3">
    <citation type="journal article" date="2006" name="Traffic">
        <title>Expanding the role of the dynein regulatory complex to non-axonemal functions: association of GAS11 with the Golgi apparatus.</title>
        <authorList>
            <person name="Colantonio J.R."/>
            <person name="Bekker J.M."/>
            <person name="Kim S.J."/>
            <person name="Morrissey K.M."/>
            <person name="Crosbie R.H."/>
            <person name="Hill K.L."/>
        </authorList>
    </citation>
    <scope>SUBCELLULAR LOCATION</scope>
</reference>
<reference key="4">
    <citation type="journal article" date="2007" name="Cell Motil. Cytoskeleton">
        <title>Direct interaction of Gas11 with microtubules: implications for the dynein regulatory complex.</title>
        <authorList>
            <person name="Bekker J.M."/>
            <person name="Colantonio J.R."/>
            <person name="Stephens A.D."/>
            <person name="Clarke W.T."/>
            <person name="King S.J."/>
            <person name="Hill K.L."/>
            <person name="Crosbie R.H."/>
        </authorList>
    </citation>
    <scope>FUNCTION</scope>
    <scope>INTERACTION WITH MICROTUBULES</scope>
    <scope>SUBCELLULAR LOCATION</scope>
</reference>
<reference key="5">
    <citation type="journal article" date="2008" name="Arch. Biochem. Biophys.">
        <title>Interaction of Rab3B with microtubule-binding protein Gas8 in NIH 3T3 cells.</title>
        <authorList>
            <person name="Nishimura N."/>
            <person name="Araki K."/>
            <person name="Shinahara W."/>
            <person name="Nakano Y."/>
            <person name="Nishimura K."/>
            <person name="Higashio H."/>
            <person name="Sasaki T."/>
        </authorList>
    </citation>
    <scope>INTERACTION WITH RAB3B</scope>
    <scope>SUBCELLULAR LOCATION</scope>
    <scope>TISSUE SPECIFICITY</scope>
</reference>
<reference key="6">
    <citation type="journal article" date="2011" name="J. Biol. Chem.">
        <title>Growth arrest specific 8 (Gas8) and G protein-coupled receptor kinase 2 (GRK2) cooperate in the control of Smoothened signaling.</title>
        <authorList>
            <person name="Evron T."/>
            <person name="Philipp M."/>
            <person name="Lu J."/>
            <person name="Meloni A.R."/>
            <person name="Burkhalter M."/>
            <person name="Chen W."/>
            <person name="Caron M.G."/>
        </authorList>
    </citation>
    <scope>FUNCTION</scope>
    <scope>SUBCELLULAR LOCATION</scope>
    <scope>INTERACTION WITH SMO</scope>
</reference>
<reference key="7">
    <citation type="journal article" date="2015" name="Am. J. Hum. Genet.">
        <title>Loss-of-function GAS8 mutations cause primary ciliary dyskinesia and disrupt the nexin-dynein regulatory complex.</title>
        <authorList>
            <person name="Olbrich H."/>
            <person name="Cremers C."/>
            <person name="Loges N.T."/>
            <person name="Werner C."/>
            <person name="Nielsen K.G."/>
            <person name="Marthin J.K."/>
            <person name="Philipsen M."/>
            <person name="Wallmeier J."/>
            <person name="Pennekamp P."/>
            <person name="Menchen T."/>
            <person name="Edelbusch C."/>
            <person name="Dougherty G.W."/>
            <person name="Schwartz O."/>
            <person name="Thiele H."/>
            <person name="Altmueller J."/>
            <person name="Rommelmann F."/>
            <person name="Omran H."/>
        </authorList>
    </citation>
    <scope>SUBCELLULAR LOCATION</scope>
</reference>
<reference key="8">
    <citation type="journal article" date="2016" name="PLoS Genet.">
        <title>Mutation of growth arrest specific 8 reveals a role in motile cilia function and human disease.</title>
        <authorList>
            <person name="Lewis W.R."/>
            <person name="Malarkey E.B."/>
            <person name="Tritschler D."/>
            <person name="Bower R."/>
            <person name="Pasek R.C."/>
            <person name="Porath J.D."/>
            <person name="Birket S.E."/>
            <person name="Saunier S."/>
            <person name="Antignac C."/>
            <person name="Knowles M.R."/>
            <person name="Leigh M.W."/>
            <person name="Zariwala M.A."/>
            <person name="Challa A.K."/>
            <person name="Kesterson R.A."/>
            <person name="Rowe S.M."/>
            <person name="Drummond I.A."/>
            <person name="Parant J.M."/>
            <person name="Hildebrandt F."/>
            <person name="Porter M.E."/>
            <person name="Yoder B.K."/>
            <person name="Berbari N.F."/>
        </authorList>
    </citation>
    <scope>FUNCTION</scope>
    <scope>SUBCELLULAR LOCATION</scope>
    <scope>DISRUPTION PHENOTYPE</scope>
    <scope>MUTAGENESIS OF ALA-391</scope>
</reference>
<reference key="9">
    <citation type="journal article" date="2020" name="PLoS Genet.">
        <title>Nexin-Dynein regulatory complex component DRC7 but not FBXL13 is required for sperm flagellum formation and male fertility in mice.</title>
        <authorList>
            <person name="Morohoshi A."/>
            <person name="Miyata H."/>
            <person name="Shimada K."/>
            <person name="Nozawa K."/>
            <person name="Matsumura T."/>
            <person name="Yanase R."/>
            <person name="Shiba K."/>
            <person name="Inaba K."/>
            <person name="Ikawa M."/>
        </authorList>
    </citation>
    <scope>SUBCELLULAR LOCATION</scope>
    <scope>INTERACTION WITH DRC7</scope>
</reference>
<sequence>MAPKKKGKKGKAKGTAIVDGVAPEDMTKEQVEEHVARIREELDREREERNYFQLERDKIHTFWEITRRQLEEKKAELRNKDREMEEAEERHQVEIKVYKQKVKHLLYEHQNNLAEVKAEGTVVMKLAQKEHRTQEGALRKDMRVLKVELKEQELANEVVIKNLCLKQAEEITKMRNDFERQVREIEAKYDKKMKMLRDELDLRRKTEIHEVEERKNGQISTLMQRHEEAFTDIKNYYNDITLNNLALINSLKEQMEDMRKKEEHMEREMAEVTLQNRRLADPLQKAKDEMNEMQKRLGNHERDKQILVCTKARLKVAERELKDLKWEHEVLEQRFIKVQQEREELYRKFADAIQEVQQKTGFKNLLLERKLQALNAAVEKREVQFNEVLAASNLDPTALTLVSRKLEDVLESKNTTIKDLQYELARVCKAHNDLLRTYEAKLLAFGIPLDNVGFKPLETAVIGQTLGQGPAGLVGAPT</sequence>
<evidence type="ECO:0000250" key="1">
    <source>
        <dbReference type="UniProtKB" id="O95995"/>
    </source>
</evidence>
<evidence type="ECO:0000250" key="2">
    <source>
        <dbReference type="UniProtKB" id="Q7XJ96"/>
    </source>
</evidence>
<evidence type="ECO:0000255" key="3"/>
<evidence type="ECO:0000256" key="4">
    <source>
        <dbReference type="SAM" id="MobiDB-lite"/>
    </source>
</evidence>
<evidence type="ECO:0000269" key="5">
    <source>
    </source>
</evidence>
<evidence type="ECO:0000269" key="6">
    <source>
    </source>
</evidence>
<evidence type="ECO:0000269" key="7">
    <source>
    </source>
</evidence>
<evidence type="ECO:0000269" key="8">
    <source>
    </source>
</evidence>
<evidence type="ECO:0000269" key="9">
    <source>
    </source>
</evidence>
<evidence type="ECO:0000269" key="10">
    <source>
    </source>
</evidence>
<evidence type="ECO:0000269" key="11">
    <source>
    </source>
</evidence>
<evidence type="ECO:0000269" key="12">
    <source>
    </source>
</evidence>
<evidence type="ECO:0000303" key="13">
    <source>
    </source>
</evidence>
<evidence type="ECO:0000305" key="14"/>
<name>DRC4_MOUSE</name>
<proteinExistence type="evidence at protein level"/>
<dbReference type="EMBL" id="U19859">
    <property type="protein sequence ID" value="AAA85258.1"/>
    <property type="status" value="ALT_FRAME"/>
    <property type="molecule type" value="mRNA"/>
</dbReference>
<dbReference type="EMBL" id="BC003779">
    <property type="protein sequence ID" value="AAH03779.2"/>
    <property type="molecule type" value="mRNA"/>
</dbReference>
<dbReference type="CCDS" id="CCDS40512.1"/>
<dbReference type="RefSeq" id="NP_061343.2">
    <property type="nucleotide sequence ID" value="NM_018855.3"/>
</dbReference>
<dbReference type="SMR" id="Q60779"/>
<dbReference type="BioGRID" id="222565">
    <property type="interactions" value="4"/>
</dbReference>
<dbReference type="FunCoup" id="Q60779">
    <property type="interactions" value="305"/>
</dbReference>
<dbReference type="STRING" id="10090.ENSMUSP00000090730"/>
<dbReference type="iPTMnet" id="Q60779"/>
<dbReference type="PhosphoSitePlus" id="Q60779"/>
<dbReference type="jPOST" id="Q60779"/>
<dbReference type="PaxDb" id="10090-ENSMUSP00000090730"/>
<dbReference type="ProteomicsDB" id="267564"/>
<dbReference type="Antibodypedia" id="30991">
    <property type="antibodies" value="168 antibodies from 25 providers"/>
</dbReference>
<dbReference type="DNASU" id="104346"/>
<dbReference type="Ensembl" id="ENSMUST00000093043.7">
    <property type="protein sequence ID" value="ENSMUSP00000090730.6"/>
    <property type="gene ID" value="ENSMUSG00000040220.11"/>
</dbReference>
<dbReference type="GeneID" id="104346"/>
<dbReference type="KEGG" id="mmu:104346"/>
<dbReference type="UCSC" id="uc009nwk.1">
    <property type="organism name" value="mouse"/>
</dbReference>
<dbReference type="AGR" id="MGI:1202386"/>
<dbReference type="CTD" id="2622"/>
<dbReference type="MGI" id="MGI:1202386">
    <property type="gene designation" value="Gas8"/>
</dbReference>
<dbReference type="VEuPathDB" id="HostDB:ENSMUSG00000040220"/>
<dbReference type="eggNOG" id="ENOG502QQDA">
    <property type="taxonomic scope" value="Eukaryota"/>
</dbReference>
<dbReference type="GeneTree" id="ENSGT00390000009477"/>
<dbReference type="HOGENOM" id="CLU_045343_0_0_1"/>
<dbReference type="InParanoid" id="Q60779"/>
<dbReference type="OMA" id="MKHLQYE"/>
<dbReference type="OrthoDB" id="767661at2759"/>
<dbReference type="PhylomeDB" id="Q60779"/>
<dbReference type="TreeFam" id="TF323819"/>
<dbReference type="Reactome" id="R-MMU-5635838">
    <property type="pathway name" value="Activation of SMO"/>
</dbReference>
<dbReference type="BioGRID-ORCS" id="104346">
    <property type="hits" value="4 hits in 76 CRISPR screens"/>
</dbReference>
<dbReference type="ChiTaRS" id="Gas8">
    <property type="organism name" value="mouse"/>
</dbReference>
<dbReference type="PRO" id="PR:Q60779"/>
<dbReference type="Proteomes" id="UP000000589">
    <property type="component" value="Chromosome 8"/>
</dbReference>
<dbReference type="RNAct" id="Q60779">
    <property type="molecule type" value="protein"/>
</dbReference>
<dbReference type="Bgee" id="ENSMUSG00000040220">
    <property type="expression patterns" value="Expressed in ear vesicle and 229 other cell types or tissues"/>
</dbReference>
<dbReference type="ExpressionAtlas" id="Q60779">
    <property type="expression patterns" value="baseline and differential"/>
</dbReference>
<dbReference type="GO" id="GO:0097729">
    <property type="term" value="C:9+2 motile cilium"/>
    <property type="evidence" value="ECO:0000314"/>
    <property type="project" value="MGI"/>
</dbReference>
<dbReference type="GO" id="GO:0005930">
    <property type="term" value="C:axoneme"/>
    <property type="evidence" value="ECO:0000250"/>
    <property type="project" value="UniProtKB"/>
</dbReference>
<dbReference type="GO" id="GO:0036064">
    <property type="term" value="C:ciliary basal body"/>
    <property type="evidence" value="ECO:0000314"/>
    <property type="project" value="UniProtKB"/>
</dbReference>
<dbReference type="GO" id="GO:0005737">
    <property type="term" value="C:cytoplasm"/>
    <property type="evidence" value="ECO:0000314"/>
    <property type="project" value="UniProtKB"/>
</dbReference>
<dbReference type="GO" id="GO:0005829">
    <property type="term" value="C:cytosol"/>
    <property type="evidence" value="ECO:0007669"/>
    <property type="project" value="Ensembl"/>
</dbReference>
<dbReference type="GO" id="GO:0005576">
    <property type="term" value="C:extracellular region"/>
    <property type="evidence" value="ECO:0007669"/>
    <property type="project" value="GOC"/>
</dbReference>
<dbReference type="GO" id="GO:0097386">
    <property type="term" value="C:glial cell projection"/>
    <property type="evidence" value="ECO:0000269"/>
    <property type="project" value="MGI"/>
</dbReference>
<dbReference type="GO" id="GO:0005794">
    <property type="term" value="C:Golgi apparatus"/>
    <property type="evidence" value="ECO:0000314"/>
    <property type="project" value="MGI"/>
</dbReference>
<dbReference type="GO" id="GO:0005874">
    <property type="term" value="C:microtubule"/>
    <property type="evidence" value="ECO:0007669"/>
    <property type="project" value="UniProtKB-KW"/>
</dbReference>
<dbReference type="GO" id="GO:0015630">
    <property type="term" value="C:microtubule cytoskeleton"/>
    <property type="evidence" value="ECO:0000314"/>
    <property type="project" value="UniProtKB"/>
</dbReference>
<dbReference type="GO" id="GO:0031514">
    <property type="term" value="C:motile cilium"/>
    <property type="evidence" value="ECO:0000314"/>
    <property type="project" value="MGI"/>
</dbReference>
<dbReference type="GO" id="GO:0005886">
    <property type="term" value="C:plasma membrane"/>
    <property type="evidence" value="ECO:0007669"/>
    <property type="project" value="Ensembl"/>
</dbReference>
<dbReference type="GO" id="GO:0036126">
    <property type="term" value="C:sperm flagellum"/>
    <property type="evidence" value="ECO:0000314"/>
    <property type="project" value="UniProtKB"/>
</dbReference>
<dbReference type="GO" id="GO:0008017">
    <property type="term" value="F:microtubule binding"/>
    <property type="evidence" value="ECO:0000314"/>
    <property type="project" value="UniProtKB"/>
</dbReference>
<dbReference type="GO" id="GO:0031267">
    <property type="term" value="F:small GTPase binding"/>
    <property type="evidence" value="ECO:0000314"/>
    <property type="project" value="MGI"/>
</dbReference>
<dbReference type="GO" id="GO:0035082">
    <property type="term" value="P:axoneme assembly"/>
    <property type="evidence" value="ECO:0000315"/>
    <property type="project" value="MGI"/>
</dbReference>
<dbReference type="GO" id="GO:0007420">
    <property type="term" value="P:brain development"/>
    <property type="evidence" value="ECO:0000315"/>
    <property type="project" value="MGI"/>
</dbReference>
<dbReference type="GO" id="GO:0007368">
    <property type="term" value="P:determination of left/right symmetry"/>
    <property type="evidence" value="ECO:0000315"/>
    <property type="project" value="MGI"/>
</dbReference>
<dbReference type="GO" id="GO:0003351">
    <property type="term" value="P:epithelial cilium movement involved in extracellular fluid movement"/>
    <property type="evidence" value="ECO:0000315"/>
    <property type="project" value="MGI"/>
</dbReference>
<dbReference type="GO" id="GO:0051649">
    <property type="term" value="P:establishment of localization in cell"/>
    <property type="evidence" value="ECO:0000315"/>
    <property type="project" value="MGI"/>
</dbReference>
<dbReference type="GO" id="GO:0030317">
    <property type="term" value="P:flagellated sperm motility"/>
    <property type="evidence" value="ECO:0000270"/>
    <property type="project" value="UniProtKB"/>
</dbReference>
<dbReference type="GO" id="GO:1903566">
    <property type="term" value="P:positive regulation of protein localization to cilium"/>
    <property type="evidence" value="ECO:0000314"/>
    <property type="project" value="UniProtKB"/>
</dbReference>
<dbReference type="GO" id="GO:0045880">
    <property type="term" value="P:positive regulation of smoothened signaling pathway"/>
    <property type="evidence" value="ECO:0000315"/>
    <property type="project" value="UniProtKB"/>
</dbReference>
<dbReference type="GO" id="GO:0008104">
    <property type="term" value="P:protein localization"/>
    <property type="evidence" value="ECO:0000314"/>
    <property type="project" value="MGI"/>
</dbReference>
<dbReference type="GO" id="GO:1904526">
    <property type="term" value="P:regulation of microtubule binding"/>
    <property type="evidence" value="ECO:0000314"/>
    <property type="project" value="UniProtKB"/>
</dbReference>
<dbReference type="InterPro" id="IPR039308">
    <property type="entry name" value="GAS8"/>
</dbReference>
<dbReference type="InterPro" id="IPR025593">
    <property type="entry name" value="GAS8_dom"/>
</dbReference>
<dbReference type="PANTHER" id="PTHR31543">
    <property type="entry name" value="DYNEIN REGULATORY COMPLEX SUBUNIT 4"/>
    <property type="match status" value="1"/>
</dbReference>
<dbReference type="PANTHER" id="PTHR31543:SF0">
    <property type="entry name" value="DYNEIN REGULATORY COMPLEX SUBUNIT 4"/>
    <property type="match status" value="1"/>
</dbReference>
<dbReference type="Pfam" id="PF13851">
    <property type="entry name" value="GAS"/>
    <property type="match status" value="1"/>
</dbReference>
<feature type="chain" id="PRO_0000220378" description="Dynein regulatory complex subunit 4">
    <location>
        <begin position="1"/>
        <end position="478"/>
    </location>
</feature>
<feature type="region of interest" description="Regulates microtubule-binding" evidence="7">
    <location>
        <begin position="1"/>
        <end position="114"/>
    </location>
</feature>
<feature type="region of interest" description="Disordered" evidence="4">
    <location>
        <begin position="1"/>
        <end position="29"/>
    </location>
</feature>
<feature type="region of interest" description="Microtubule-binding" evidence="7">
    <location>
        <begin position="115"/>
        <end position="258"/>
    </location>
</feature>
<feature type="region of interest" description="Interaction with SMO" evidence="9">
    <location>
        <begin position="357"/>
        <end position="478"/>
    </location>
</feature>
<feature type="coiled-coil region" evidence="3">
    <location>
        <begin position="24"/>
        <end position="207"/>
    </location>
</feature>
<feature type="coiled-coil region" evidence="3">
    <location>
        <begin position="242"/>
        <end position="426"/>
    </location>
</feature>
<feature type="compositionally biased region" description="Basic residues" evidence="4">
    <location>
        <begin position="1"/>
        <end position="12"/>
    </location>
</feature>
<feature type="mutagenesis site" description="Moderate decrease in cilia motility." evidence="11">
    <original>A</original>
    <variation>V</variation>
    <location>
        <position position="391"/>
    </location>
</feature>
<feature type="sequence conflict" description="In Ref. 1; AAA85258." evidence="14" ref="1">
    <original>L</original>
    <variation>Q</variation>
    <location>
        <position position="283"/>
    </location>
</feature>
<feature type="sequence conflict" description="In Ref. 1; AAA85258." evidence="14" ref="1">
    <original>Q</original>
    <variation>L</variation>
    <location>
        <position position="339"/>
    </location>
</feature>
<feature type="sequence conflict" description="In Ref. 1; AAA85258." evidence="14" ref="1">
    <original>N</original>
    <variation>D</variation>
    <location>
        <position position="451"/>
    </location>
</feature>
<feature type="sequence conflict" description="In Ref. 1; AAA85258." evidence="14" ref="1">
    <original>T</original>
    <variation>I</variation>
    <location>
        <position position="459"/>
    </location>
</feature>
<feature type="sequence conflict" description="In Ref. 1; AAA85258." evidence="14" ref="1">
    <original>A</original>
    <variation>S</variation>
    <location>
        <position position="476"/>
    </location>
</feature>
<organism>
    <name type="scientific">Mus musculus</name>
    <name type="common">Mouse</name>
    <dbReference type="NCBI Taxonomy" id="10090"/>
    <lineage>
        <taxon>Eukaryota</taxon>
        <taxon>Metazoa</taxon>
        <taxon>Chordata</taxon>
        <taxon>Craniata</taxon>
        <taxon>Vertebrata</taxon>
        <taxon>Euteleostomi</taxon>
        <taxon>Mammalia</taxon>
        <taxon>Eutheria</taxon>
        <taxon>Euarchontoglires</taxon>
        <taxon>Glires</taxon>
        <taxon>Rodentia</taxon>
        <taxon>Myomorpha</taxon>
        <taxon>Muroidea</taxon>
        <taxon>Muridae</taxon>
        <taxon>Murinae</taxon>
        <taxon>Mus</taxon>
        <taxon>Mus</taxon>
    </lineage>
</organism>
<comment type="function">
    <text evidence="2 5 7 9 11">Component of the nexin-dynein regulatory complex (N-DRC), a key regulator of ciliary/flagellar motility which maintains the alignment and integrity of the distal axoneme and regulates microtubule sliding in motile axonemes. Plays an important role in the assembly of the N-DRC linker (By similarity). Plays dual roles at both the primary (or non-motile) cilia to regulate hedgehog signaling and in motile cilia to coordinate cilia movement. Required for proper motile cilia functioning. Positively regulates ciliary smoothened (SMO)-dependent Hedgehog (Hh) signaling pathway by facilitating the trafficking of SMO into the cilium and the stimulation of SMO activity in a GRK2-dependent manner (PubMed:17366626, PubMed:21659505, PubMed:27472056). May play a role in the spermatozoa motility (PubMed:11751847).</text>
</comment>
<comment type="subunit">
    <text evidence="1 2 7 8 9 12">Component of the nexin-dynein regulatory complex (N-DRC) (By similarity). Interacts with microtubules (PubMed:17366626). Interacts with SMO (PubMed:21659505). Interacts (via coiled-coil domains) with RAB3B (in GTP-bound form) (PubMed:18396146). Interacts with DRC1 (By similarity). Interacts with DRC7 (PubMed:31961863).</text>
</comment>
<comment type="subcellular location">
    <subcellularLocation>
        <location evidence="5 9">Cytoplasm</location>
    </subcellularLocation>
    <subcellularLocation>
        <location evidence="7">Cytoplasm</location>
        <location evidence="7">Cytoskeleton</location>
    </subcellularLocation>
    <subcellularLocation>
        <location evidence="5 12">Cell projection</location>
        <location evidence="5 12">Cilium</location>
        <location evidence="5 12">Flagellum</location>
    </subcellularLocation>
    <subcellularLocation>
        <location evidence="5 10 11">Cytoplasm</location>
        <location evidence="5 10 11">Cytoskeleton</location>
        <location evidence="5 10 11">Cilium axoneme</location>
    </subcellularLocation>
    <subcellularLocation>
        <location evidence="6 9">Cytoplasm</location>
        <location evidence="6 9">Cytoskeleton</location>
        <location evidence="6 9">Cilium basal body</location>
    </subcellularLocation>
    <subcellularLocation>
        <location evidence="8">Golgi apparatus</location>
    </subcellularLocation>
    <subcellularLocation>
        <location evidence="11">Cell projection</location>
        <location evidence="11">Cilium</location>
    </subcellularLocation>
    <subcellularLocation>
        <location evidence="2">Cytoplasm</location>
        <location evidence="2">Cytoskeleton</location>
        <location evidence="2">Flagellum axoneme</location>
    </subcellularLocation>
    <text evidence="5 7">Associates with microtubules (PubMed:17366626). Localized to the cytoplasm of round spermatids, the tails of elongating spermatids, and mature spermatid tail bundles protruding into the lumen, and in the flagellum of epididymal spermatozoa (PubMed:11751847).</text>
</comment>
<comment type="tissue specificity">
    <text evidence="5 8">Highly expressed in adult testes and lung. Weakly or not expressed in other tested tissues.</text>
</comment>
<comment type="developmental stage">
    <text evidence="5">Weakly or not expressed in neonates and young adolescents. Then, it is strongly expressed postmeiotically. Accumulates in gametocytes as they approach the lumen of seminiferous tubules and thereafter.</text>
</comment>
<comment type="induction">
    <text>Expressed during serum starvation or contact inhibition of cells grown in murine fibroblasts.</text>
</comment>
<comment type="disruption phenotype">
    <text evidence="11">Mice show primary ciliary dyskinesia (PCD) like symptoms including situs inversus and hydrocephalus. Hydrocephalus starts at postnatal day 5 (P5) and becomes more pronounced as the mice mature, eventually leading to mortality between P14-P21. Development of hydrocephalus is associated with severe impairment of cilia motility on ependymal cells lining the ventricles of the brain.</text>
</comment>
<comment type="similarity">
    <text evidence="14">Belongs to the DRC4 family.</text>
</comment>
<comment type="sequence caution" evidence="14">
    <conflict type="frameshift">
        <sequence resource="EMBL-CDS" id="AAA85258"/>
    </conflict>
</comment>
<gene>
    <name type="primary">Gas8</name>
    <name evidence="13" type="synonym">Drc4</name>
    <name type="synonym">Gas11</name>
</gene>
<accession>Q60779</accession>
<accession>Q99L71</accession>